<keyword id="KW-1185">Reference proteome</keyword>
<keyword id="KW-0687">Ribonucleoprotein</keyword>
<keyword id="KW-0689">Ribosomal protein</keyword>
<accession>Q058B8</accession>
<dbReference type="EMBL" id="CP000263">
    <property type="protein sequence ID" value="ABJ90531.1"/>
    <property type="molecule type" value="Genomic_DNA"/>
</dbReference>
<dbReference type="RefSeq" id="WP_011672450.1">
    <property type="nucleotide sequence ID" value="NC_008513.1"/>
</dbReference>
<dbReference type="SMR" id="Q058B8"/>
<dbReference type="STRING" id="372461.BCc_052"/>
<dbReference type="KEGG" id="bcc:BCc_052"/>
<dbReference type="eggNOG" id="COG0227">
    <property type="taxonomic scope" value="Bacteria"/>
</dbReference>
<dbReference type="HOGENOM" id="CLU_064548_3_1_6"/>
<dbReference type="OrthoDB" id="9805609at2"/>
<dbReference type="Proteomes" id="UP000000669">
    <property type="component" value="Chromosome"/>
</dbReference>
<dbReference type="GO" id="GO:1990904">
    <property type="term" value="C:ribonucleoprotein complex"/>
    <property type="evidence" value="ECO:0007669"/>
    <property type="project" value="UniProtKB-KW"/>
</dbReference>
<dbReference type="GO" id="GO:0005840">
    <property type="term" value="C:ribosome"/>
    <property type="evidence" value="ECO:0007669"/>
    <property type="project" value="UniProtKB-KW"/>
</dbReference>
<dbReference type="GO" id="GO:0003735">
    <property type="term" value="F:structural constituent of ribosome"/>
    <property type="evidence" value="ECO:0007669"/>
    <property type="project" value="InterPro"/>
</dbReference>
<dbReference type="GO" id="GO:0006412">
    <property type="term" value="P:translation"/>
    <property type="evidence" value="ECO:0007669"/>
    <property type="project" value="UniProtKB-UniRule"/>
</dbReference>
<dbReference type="Gene3D" id="2.30.170.40">
    <property type="entry name" value="Ribosomal protein L28/L24"/>
    <property type="match status" value="1"/>
</dbReference>
<dbReference type="HAMAP" id="MF_00373">
    <property type="entry name" value="Ribosomal_bL28"/>
    <property type="match status" value="1"/>
</dbReference>
<dbReference type="InterPro" id="IPR026569">
    <property type="entry name" value="Ribosomal_bL28"/>
</dbReference>
<dbReference type="InterPro" id="IPR034704">
    <property type="entry name" value="Ribosomal_bL28/bL31-like_sf"/>
</dbReference>
<dbReference type="InterPro" id="IPR001383">
    <property type="entry name" value="Ribosomal_bL28_bact-type"/>
</dbReference>
<dbReference type="InterPro" id="IPR037147">
    <property type="entry name" value="Ribosomal_bL28_sf"/>
</dbReference>
<dbReference type="NCBIfam" id="TIGR00009">
    <property type="entry name" value="L28"/>
    <property type="match status" value="1"/>
</dbReference>
<dbReference type="Pfam" id="PF00830">
    <property type="entry name" value="Ribosomal_L28"/>
    <property type="match status" value="1"/>
</dbReference>
<dbReference type="SUPFAM" id="SSF143800">
    <property type="entry name" value="L28p-like"/>
    <property type="match status" value="1"/>
</dbReference>
<feature type="chain" id="PRO_1000007185" description="Large ribosomal subunit protein bL28">
    <location>
        <begin position="1"/>
        <end position="73"/>
    </location>
</feature>
<proteinExistence type="inferred from homology"/>
<protein>
    <recommendedName>
        <fullName evidence="1">Large ribosomal subunit protein bL28</fullName>
    </recommendedName>
    <alternativeName>
        <fullName evidence="2">50S ribosomal protein L28</fullName>
    </alternativeName>
</protein>
<evidence type="ECO:0000255" key="1">
    <source>
        <dbReference type="HAMAP-Rule" id="MF_00373"/>
    </source>
</evidence>
<evidence type="ECO:0000305" key="2"/>
<comment type="similarity">
    <text evidence="1">Belongs to the bacterial ribosomal protein bL28 family.</text>
</comment>
<organism>
    <name type="scientific">Buchnera aphidicola subsp. Cinara cedri (strain Cc)</name>
    <dbReference type="NCBI Taxonomy" id="372461"/>
    <lineage>
        <taxon>Bacteria</taxon>
        <taxon>Pseudomonadati</taxon>
        <taxon>Pseudomonadota</taxon>
        <taxon>Gammaproteobacteria</taxon>
        <taxon>Enterobacterales</taxon>
        <taxon>Erwiniaceae</taxon>
        <taxon>Buchnera</taxon>
    </lineage>
</organism>
<sequence length="73" mass="8769">MPKICQITKKKSMLGQNRSHAMNATKKKFSLNIQYHTFWLPEKKKKIRIRITKKGIRMINKFGISKIYKKYII</sequence>
<name>RL28_BUCCC</name>
<reference key="1">
    <citation type="journal article" date="2006" name="Science">
        <title>A small microbial genome: the end of a long symbiotic relationship?</title>
        <authorList>
            <person name="Perez-Brocal V."/>
            <person name="Gil R."/>
            <person name="Ramos S."/>
            <person name="Lamelas A."/>
            <person name="Postigo M."/>
            <person name="Michelena J.M."/>
            <person name="Silva F.J."/>
            <person name="Moya A."/>
            <person name="Latorre A."/>
        </authorList>
    </citation>
    <scope>NUCLEOTIDE SEQUENCE [LARGE SCALE GENOMIC DNA]</scope>
    <source>
        <strain>Cc</strain>
    </source>
</reference>
<gene>
    <name evidence="1" type="primary">rpmB</name>
    <name type="ordered locus">BCc_052</name>
</gene>